<keyword id="KW-0067">ATP-binding</keyword>
<keyword id="KW-0966">Cell projection</keyword>
<keyword id="KW-0963">Cytoplasm</keyword>
<keyword id="KW-0968">Cytoplasmic vesicle</keyword>
<keyword id="KW-0333">Golgi apparatus</keyword>
<keyword id="KW-0449">Lipoprotein</keyword>
<keyword id="KW-0472">Membrane</keyword>
<keyword id="KW-0520">NAD</keyword>
<keyword id="KW-0547">Nucleotide-binding</keyword>
<keyword id="KW-0548">Nucleotidyltransferase</keyword>
<keyword id="KW-0564">Palmitate</keyword>
<keyword id="KW-0662">Pyridine nucleotide biosynthesis</keyword>
<keyword id="KW-1185">Reference proteome</keyword>
<keyword id="KW-0808">Transferase</keyword>
<accession>Q6PC93</accession>
<accession>Q1LVF2</accession>
<dbReference type="EC" id="2.7.7.1" evidence="3"/>
<dbReference type="EC" id="2.7.7.18" evidence="3"/>
<dbReference type="EMBL" id="BX681417">
    <property type="protein sequence ID" value="CAK05286.1"/>
    <property type="molecule type" value="Genomic_DNA"/>
</dbReference>
<dbReference type="EMBL" id="BC059430">
    <property type="protein sequence ID" value="AAH59430.1"/>
    <property type="molecule type" value="mRNA"/>
</dbReference>
<dbReference type="RefSeq" id="NP_956298.1">
    <property type="nucleotide sequence ID" value="NM_200004.1"/>
</dbReference>
<dbReference type="SMR" id="Q6PC93"/>
<dbReference type="FunCoup" id="Q6PC93">
    <property type="interactions" value="180"/>
</dbReference>
<dbReference type="STRING" id="7955.ENSDARP00000004144"/>
<dbReference type="PaxDb" id="7955-ENSDARP00000004144"/>
<dbReference type="GeneID" id="336257"/>
<dbReference type="KEGG" id="dre:336257"/>
<dbReference type="AGR" id="ZFIN:ZDB-GENE-030131-8201"/>
<dbReference type="CTD" id="23057"/>
<dbReference type="ZFIN" id="ZDB-GENE-030131-8201">
    <property type="gene designation" value="nmnat2"/>
</dbReference>
<dbReference type="eggNOG" id="KOG3199">
    <property type="taxonomic scope" value="Eukaryota"/>
</dbReference>
<dbReference type="InParanoid" id="Q6PC93"/>
<dbReference type="OrthoDB" id="422187at2759"/>
<dbReference type="PhylomeDB" id="Q6PC93"/>
<dbReference type="TreeFam" id="TF315035"/>
<dbReference type="Reactome" id="R-DRE-196807">
    <property type="pathway name" value="Nicotinate metabolism"/>
</dbReference>
<dbReference type="UniPathway" id="UPA00253">
    <property type="reaction ID" value="UER00332"/>
</dbReference>
<dbReference type="UniPathway" id="UPA00253">
    <property type="reaction ID" value="UER00600"/>
</dbReference>
<dbReference type="PRO" id="PR:Q6PC93"/>
<dbReference type="Proteomes" id="UP000000437">
    <property type="component" value="Chromosome 2"/>
</dbReference>
<dbReference type="GO" id="GO:0030424">
    <property type="term" value="C:axon"/>
    <property type="evidence" value="ECO:0007669"/>
    <property type="project" value="UniProtKB-SubCell"/>
</dbReference>
<dbReference type="GO" id="GO:0030659">
    <property type="term" value="C:cytoplasmic vesicle membrane"/>
    <property type="evidence" value="ECO:0007669"/>
    <property type="project" value="UniProtKB-SubCell"/>
</dbReference>
<dbReference type="GO" id="GO:0005794">
    <property type="term" value="C:Golgi apparatus"/>
    <property type="evidence" value="ECO:0000318"/>
    <property type="project" value="GO_Central"/>
</dbReference>
<dbReference type="GO" id="GO:0000139">
    <property type="term" value="C:Golgi membrane"/>
    <property type="evidence" value="ECO:0007669"/>
    <property type="project" value="UniProtKB-SubCell"/>
</dbReference>
<dbReference type="GO" id="GO:0005524">
    <property type="term" value="F:ATP binding"/>
    <property type="evidence" value="ECO:0007669"/>
    <property type="project" value="UniProtKB-KW"/>
</dbReference>
<dbReference type="GO" id="GO:0000309">
    <property type="term" value="F:nicotinamide-nucleotide adenylyltransferase activity"/>
    <property type="evidence" value="ECO:0000318"/>
    <property type="project" value="GO_Central"/>
</dbReference>
<dbReference type="GO" id="GO:0004515">
    <property type="term" value="F:nicotinate-nucleotide adenylyltransferase activity"/>
    <property type="evidence" value="ECO:0000318"/>
    <property type="project" value="GO_Central"/>
</dbReference>
<dbReference type="GO" id="GO:0140768">
    <property type="term" value="F:protein ADP-ribosyltransferase-substrate adaptor activity"/>
    <property type="evidence" value="ECO:0000250"/>
    <property type="project" value="UniProtKB"/>
</dbReference>
<dbReference type="GO" id="GO:0009435">
    <property type="term" value="P:NAD biosynthetic process"/>
    <property type="evidence" value="ECO:0000318"/>
    <property type="project" value="GO_Central"/>
</dbReference>
<dbReference type="CDD" id="cd09286">
    <property type="entry name" value="NMNAT_Eukarya"/>
    <property type="match status" value="1"/>
</dbReference>
<dbReference type="FunFam" id="3.40.50.620:FF:000080">
    <property type="entry name" value="Nicotinamide/nicotinic acid mononucleotide adenylyltransferase 2"/>
    <property type="match status" value="2"/>
</dbReference>
<dbReference type="Gene3D" id="3.40.50.620">
    <property type="entry name" value="HUPs"/>
    <property type="match status" value="1"/>
</dbReference>
<dbReference type="InterPro" id="IPR004821">
    <property type="entry name" value="Cyt_trans-like"/>
</dbReference>
<dbReference type="InterPro" id="IPR051182">
    <property type="entry name" value="Euk_NMN_adenylyltrnsfrase"/>
</dbReference>
<dbReference type="InterPro" id="IPR045094">
    <property type="entry name" value="NMNAT_euk"/>
</dbReference>
<dbReference type="InterPro" id="IPR014729">
    <property type="entry name" value="Rossmann-like_a/b/a_fold"/>
</dbReference>
<dbReference type="PANTHER" id="PTHR12039">
    <property type="entry name" value="NICOTINAMIDE MONONUCLEOTIDE ADENYLYLTRANSFERASE"/>
    <property type="match status" value="1"/>
</dbReference>
<dbReference type="PANTHER" id="PTHR12039:SF18">
    <property type="entry name" value="NICOTINAMIDE_NICOTINIC ACID MONONUCLEOTIDE ADENYLYLTRANSFERASE 2"/>
    <property type="match status" value="1"/>
</dbReference>
<dbReference type="Pfam" id="PF01467">
    <property type="entry name" value="CTP_transf_like"/>
    <property type="match status" value="1"/>
</dbReference>
<dbReference type="SUPFAM" id="SSF52374">
    <property type="entry name" value="Nucleotidylyl transferase"/>
    <property type="match status" value="1"/>
</dbReference>
<gene>
    <name type="primary">nmnat2</name>
    <name type="ORF">si:dkey-161l11.3</name>
</gene>
<proteinExistence type="evidence at transcript level"/>
<comment type="function">
    <text evidence="1 3">Nicotinamide/nicotinate-nucleotide adenylyltransferase that acts as an axon maintenance factor. Axon survival factor required for the maintenance of healthy axons: acts by delaying Wallerian axon degeneration, an evolutionarily conserved process that drives the loss of damaged axons. Catalyzes the formation of NAD(+) from nicotinamide mononucleotide (NMN) and ATP. Can also use the deamidated form; nicotinic acid mononucleotide (NaMN) as substrate but with a lower efficiency. Also catalyzes the reverse reaction, i.e. the pyrophosphorolytic cleavage of NAD(+). For the pyrophosphorolytic activity prefers NAD(+), NADH and NaAD as substrates and degrades nicotinic acid adenine dinucleotide phosphate (NHD) less effectively. Also acts as an activator of ADP-ribosylation by supporting the catalytic activity of PARP16 and promoting mono-ADP-ribosylation of ribosomes by PARP16. May be involved in the maintenance of axonal integrity (By similarity).</text>
</comment>
<comment type="catalytic activity">
    <reaction evidence="3">
        <text>beta-nicotinamide D-ribonucleotide + ATP + H(+) = diphosphate + NAD(+)</text>
        <dbReference type="Rhea" id="RHEA:21360"/>
        <dbReference type="ChEBI" id="CHEBI:14649"/>
        <dbReference type="ChEBI" id="CHEBI:15378"/>
        <dbReference type="ChEBI" id="CHEBI:30616"/>
        <dbReference type="ChEBI" id="CHEBI:33019"/>
        <dbReference type="ChEBI" id="CHEBI:57540"/>
        <dbReference type="EC" id="2.7.7.1"/>
    </reaction>
    <physiologicalReaction direction="left-to-right" evidence="3">
        <dbReference type="Rhea" id="RHEA:21361"/>
    </physiologicalReaction>
    <physiologicalReaction direction="right-to-left" evidence="3">
        <dbReference type="Rhea" id="RHEA:21362"/>
    </physiologicalReaction>
</comment>
<comment type="catalytic activity">
    <reaction evidence="3">
        <text>nicotinate beta-D-ribonucleotide + ATP + H(+) = deamido-NAD(+) + diphosphate</text>
        <dbReference type="Rhea" id="RHEA:22860"/>
        <dbReference type="ChEBI" id="CHEBI:15378"/>
        <dbReference type="ChEBI" id="CHEBI:30616"/>
        <dbReference type="ChEBI" id="CHEBI:33019"/>
        <dbReference type="ChEBI" id="CHEBI:57502"/>
        <dbReference type="ChEBI" id="CHEBI:58437"/>
        <dbReference type="EC" id="2.7.7.18"/>
    </reaction>
    <physiologicalReaction direction="left-to-right" evidence="3">
        <dbReference type="Rhea" id="RHEA:22861"/>
    </physiologicalReaction>
    <physiologicalReaction direction="right-to-left" evidence="3">
        <dbReference type="Rhea" id="RHEA:22862"/>
    </physiologicalReaction>
</comment>
<comment type="cofactor">
    <cofactor evidence="3">
        <name>Mg(2+)</name>
        <dbReference type="ChEBI" id="CHEBI:18420"/>
    </cofactor>
    <text evidence="3">Divalent metal cations. Mg(2+) confers the highest activity.</text>
</comment>
<comment type="pathway">
    <text evidence="3">Cofactor biosynthesis; NAD(+) biosynthesis; NAD(+) from nicotinamide D-ribonucleotide: step 1/1.</text>
</comment>
<comment type="pathway">
    <text evidence="3">Cofactor biosynthesis; NAD(+) biosynthesis; deamido-NAD(+) from nicotinate D-ribonucleotide: step 1/1.</text>
</comment>
<comment type="subunit">
    <text evidence="3">Monomer.</text>
</comment>
<comment type="subcellular location">
    <subcellularLocation>
        <location evidence="1">Golgi apparatus membrane</location>
        <topology evidence="1">Lipid-anchor</topology>
    </subcellularLocation>
    <subcellularLocation>
        <location evidence="1">Cytoplasmic vesicle membrane</location>
        <topology evidence="1">Lipid-anchor</topology>
    </subcellularLocation>
    <subcellularLocation>
        <location evidence="3">Cytoplasm</location>
    </subcellularLocation>
    <subcellularLocation>
        <location evidence="1">Cell projection</location>
        <location evidence="1">Axon</location>
    </subcellularLocation>
    <text evidence="1">Delivered to axons with Golgi-derived cytoplasmic vesicles.</text>
</comment>
<comment type="similarity">
    <text evidence="4">Belongs to the eukaryotic NMN adenylyltransferase family.</text>
</comment>
<organism>
    <name type="scientific">Danio rerio</name>
    <name type="common">Zebrafish</name>
    <name type="synonym">Brachydanio rerio</name>
    <dbReference type="NCBI Taxonomy" id="7955"/>
    <lineage>
        <taxon>Eukaryota</taxon>
        <taxon>Metazoa</taxon>
        <taxon>Chordata</taxon>
        <taxon>Craniata</taxon>
        <taxon>Vertebrata</taxon>
        <taxon>Euteleostomi</taxon>
        <taxon>Actinopterygii</taxon>
        <taxon>Neopterygii</taxon>
        <taxon>Teleostei</taxon>
        <taxon>Ostariophysi</taxon>
        <taxon>Cypriniformes</taxon>
        <taxon>Danionidae</taxon>
        <taxon>Danioninae</taxon>
        <taxon>Danio</taxon>
    </lineage>
</organism>
<protein>
    <recommendedName>
        <fullName evidence="4">Nicotinamide/nicotinic acid mononucleotide adenylyltransferase 2</fullName>
        <shortName>NMN/NaMN adenylyltransferase 2</shortName>
        <ecNumber evidence="3">2.7.7.1</ecNumber>
        <ecNumber evidence="3">2.7.7.18</ecNumber>
    </recommendedName>
    <alternativeName>
        <fullName>Nicotinamide mononucleotide adenylyltransferase 2</fullName>
        <shortName>NMN adenylyltransferase 2</shortName>
    </alternativeName>
    <alternativeName>
        <fullName>Nicotinate-nucleotide adenylyltransferase 2</fullName>
        <shortName>NaMN adenylyltransferase 2</shortName>
    </alternativeName>
</protein>
<sequence length="304" mass="34209">MTENTKTHVILLSCGSFNPITKGHIHMFEKAREYLHKTGRFIVIGGIVSPVHDSYGKPGLVPSRHRLTMCQLAVQSSDWIRVDPWECYQDTWQTTCSVLEHHRDLMKRVTGCILSNVNTPSTTPVIGQPQNETSAIYQNTVNKSVAIKFWGKMSESLGKICCVRPHMDRFTFVDENANLGTAMRYEEIELRILLLCGSDLLESFCIPGLWNESDMEVIVGDFGIVVVPRDGADTERIMNHSSVLRKHKDNIIVVKDEIDHPMSIVSSTKSRLALQHGDGHVVDYLSQPVIDYILQSQLYINASG</sequence>
<name>NMNA2_DANRE</name>
<feature type="chain" id="PRO_0000328663" description="Nicotinamide/nicotinic acid mononucleotide adenylyltransferase 2">
    <location>
        <begin position="1"/>
        <end position="304"/>
    </location>
</feature>
<feature type="binding site" evidence="2">
    <location>
        <position position="16"/>
    </location>
    <ligand>
        <name>NAD(+)</name>
        <dbReference type="ChEBI" id="CHEBI:57540"/>
    </ligand>
</feature>
<feature type="binding site" evidence="2">
    <location>
        <position position="17"/>
    </location>
    <ligand>
        <name>NAD(+)</name>
        <dbReference type="ChEBI" id="CHEBI:57540"/>
    </ligand>
</feature>
<feature type="binding site" description="in other chain" evidence="2">
    <location>
        <position position="24"/>
    </location>
    <ligand>
        <name>ATP</name>
        <dbReference type="ChEBI" id="CHEBI:30616"/>
        <note>ligand shared between dimeric partners</note>
    </ligand>
</feature>
<feature type="binding site" evidence="2">
    <location>
        <position position="92"/>
    </location>
    <ligand>
        <name>NAD(+)</name>
        <dbReference type="ChEBI" id="CHEBI:57540"/>
    </ligand>
</feature>
<feature type="binding site" evidence="2">
    <location>
        <position position="95"/>
    </location>
    <ligand>
        <name>NAD(+)</name>
        <dbReference type="ChEBI" id="CHEBI:57540"/>
    </ligand>
</feature>
<feature type="binding site" evidence="2">
    <location>
        <position position="197"/>
    </location>
    <ligand>
        <name>NAD(+)</name>
        <dbReference type="ChEBI" id="CHEBI:57540"/>
    </ligand>
</feature>
<feature type="binding site" evidence="2">
    <location>
        <position position="199"/>
    </location>
    <ligand>
        <name>NAD(+)</name>
        <dbReference type="ChEBI" id="CHEBI:57540"/>
    </ligand>
</feature>
<feature type="binding site" evidence="2">
    <location>
        <position position="209"/>
    </location>
    <ligand>
        <name>NAD(+)</name>
        <dbReference type="ChEBI" id="CHEBI:57540"/>
    </ligand>
</feature>
<feature type="binding site" evidence="2">
    <location>
        <position position="210"/>
    </location>
    <ligand>
        <name>NAD(+)</name>
        <dbReference type="ChEBI" id="CHEBI:57540"/>
    </ligand>
</feature>
<feature type="binding site" evidence="2">
    <location>
        <position position="229"/>
    </location>
    <ligand>
        <name>NAD(+)</name>
        <dbReference type="ChEBI" id="CHEBI:57540"/>
    </ligand>
</feature>
<feature type="binding site" description="in other chain" evidence="2">
    <location>
        <begin position="268"/>
        <end position="271"/>
    </location>
    <ligand>
        <name>ATP</name>
        <dbReference type="ChEBI" id="CHEBI:30616"/>
        <note>ligand shared between dimeric partners</note>
    </ligand>
</feature>
<feature type="lipid moiety-binding region" description="S-palmitoyl cysteine" evidence="1">
    <location>
        <position position="161"/>
    </location>
</feature>
<feature type="lipid moiety-binding region" description="S-palmitoyl cysteine" evidence="1">
    <location>
        <position position="162"/>
    </location>
</feature>
<feature type="sequence conflict" description="In Ref. 1; CAK05286." evidence="4" ref="1">
    <original>P</original>
    <variation>T</variation>
    <location>
        <position position="261"/>
    </location>
</feature>
<evidence type="ECO:0000250" key="1">
    <source>
        <dbReference type="UniProtKB" id="Q8BNJ3"/>
    </source>
</evidence>
<evidence type="ECO:0000250" key="2">
    <source>
        <dbReference type="UniProtKB" id="Q96T66"/>
    </source>
</evidence>
<evidence type="ECO:0000250" key="3">
    <source>
        <dbReference type="UniProtKB" id="Q9BZQ4"/>
    </source>
</evidence>
<evidence type="ECO:0000305" key="4"/>
<reference key="1">
    <citation type="journal article" date="2013" name="Nature">
        <title>The zebrafish reference genome sequence and its relationship to the human genome.</title>
        <authorList>
            <person name="Howe K."/>
            <person name="Clark M.D."/>
            <person name="Torroja C.F."/>
            <person name="Torrance J."/>
            <person name="Berthelot C."/>
            <person name="Muffato M."/>
            <person name="Collins J.E."/>
            <person name="Humphray S."/>
            <person name="McLaren K."/>
            <person name="Matthews L."/>
            <person name="McLaren S."/>
            <person name="Sealy I."/>
            <person name="Caccamo M."/>
            <person name="Churcher C."/>
            <person name="Scott C."/>
            <person name="Barrett J.C."/>
            <person name="Koch R."/>
            <person name="Rauch G.J."/>
            <person name="White S."/>
            <person name="Chow W."/>
            <person name="Kilian B."/>
            <person name="Quintais L.T."/>
            <person name="Guerra-Assuncao J.A."/>
            <person name="Zhou Y."/>
            <person name="Gu Y."/>
            <person name="Yen J."/>
            <person name="Vogel J.H."/>
            <person name="Eyre T."/>
            <person name="Redmond S."/>
            <person name="Banerjee R."/>
            <person name="Chi J."/>
            <person name="Fu B."/>
            <person name="Langley E."/>
            <person name="Maguire S.F."/>
            <person name="Laird G.K."/>
            <person name="Lloyd D."/>
            <person name="Kenyon E."/>
            <person name="Donaldson S."/>
            <person name="Sehra H."/>
            <person name="Almeida-King J."/>
            <person name="Loveland J."/>
            <person name="Trevanion S."/>
            <person name="Jones M."/>
            <person name="Quail M."/>
            <person name="Willey D."/>
            <person name="Hunt A."/>
            <person name="Burton J."/>
            <person name="Sims S."/>
            <person name="McLay K."/>
            <person name="Plumb B."/>
            <person name="Davis J."/>
            <person name="Clee C."/>
            <person name="Oliver K."/>
            <person name="Clark R."/>
            <person name="Riddle C."/>
            <person name="Elliot D."/>
            <person name="Threadgold G."/>
            <person name="Harden G."/>
            <person name="Ware D."/>
            <person name="Begum S."/>
            <person name="Mortimore B."/>
            <person name="Kerry G."/>
            <person name="Heath P."/>
            <person name="Phillimore B."/>
            <person name="Tracey A."/>
            <person name="Corby N."/>
            <person name="Dunn M."/>
            <person name="Johnson C."/>
            <person name="Wood J."/>
            <person name="Clark S."/>
            <person name="Pelan S."/>
            <person name="Griffiths G."/>
            <person name="Smith M."/>
            <person name="Glithero R."/>
            <person name="Howden P."/>
            <person name="Barker N."/>
            <person name="Lloyd C."/>
            <person name="Stevens C."/>
            <person name="Harley J."/>
            <person name="Holt K."/>
            <person name="Panagiotidis G."/>
            <person name="Lovell J."/>
            <person name="Beasley H."/>
            <person name="Henderson C."/>
            <person name="Gordon D."/>
            <person name="Auger K."/>
            <person name="Wright D."/>
            <person name="Collins J."/>
            <person name="Raisen C."/>
            <person name="Dyer L."/>
            <person name="Leung K."/>
            <person name="Robertson L."/>
            <person name="Ambridge K."/>
            <person name="Leongamornlert D."/>
            <person name="McGuire S."/>
            <person name="Gilderthorp R."/>
            <person name="Griffiths C."/>
            <person name="Manthravadi D."/>
            <person name="Nichol S."/>
            <person name="Barker G."/>
            <person name="Whitehead S."/>
            <person name="Kay M."/>
            <person name="Brown J."/>
            <person name="Murnane C."/>
            <person name="Gray E."/>
            <person name="Humphries M."/>
            <person name="Sycamore N."/>
            <person name="Barker D."/>
            <person name="Saunders D."/>
            <person name="Wallis J."/>
            <person name="Babbage A."/>
            <person name="Hammond S."/>
            <person name="Mashreghi-Mohammadi M."/>
            <person name="Barr L."/>
            <person name="Martin S."/>
            <person name="Wray P."/>
            <person name="Ellington A."/>
            <person name="Matthews N."/>
            <person name="Ellwood M."/>
            <person name="Woodmansey R."/>
            <person name="Clark G."/>
            <person name="Cooper J."/>
            <person name="Tromans A."/>
            <person name="Grafham D."/>
            <person name="Skuce C."/>
            <person name="Pandian R."/>
            <person name="Andrews R."/>
            <person name="Harrison E."/>
            <person name="Kimberley A."/>
            <person name="Garnett J."/>
            <person name="Fosker N."/>
            <person name="Hall R."/>
            <person name="Garner P."/>
            <person name="Kelly D."/>
            <person name="Bird C."/>
            <person name="Palmer S."/>
            <person name="Gehring I."/>
            <person name="Berger A."/>
            <person name="Dooley C.M."/>
            <person name="Ersan-Urun Z."/>
            <person name="Eser C."/>
            <person name="Geiger H."/>
            <person name="Geisler M."/>
            <person name="Karotki L."/>
            <person name="Kirn A."/>
            <person name="Konantz J."/>
            <person name="Konantz M."/>
            <person name="Oberlander M."/>
            <person name="Rudolph-Geiger S."/>
            <person name="Teucke M."/>
            <person name="Lanz C."/>
            <person name="Raddatz G."/>
            <person name="Osoegawa K."/>
            <person name="Zhu B."/>
            <person name="Rapp A."/>
            <person name="Widaa S."/>
            <person name="Langford C."/>
            <person name="Yang F."/>
            <person name="Schuster S.C."/>
            <person name="Carter N.P."/>
            <person name="Harrow J."/>
            <person name="Ning Z."/>
            <person name="Herrero J."/>
            <person name="Searle S.M."/>
            <person name="Enright A."/>
            <person name="Geisler R."/>
            <person name="Plasterk R.H."/>
            <person name="Lee C."/>
            <person name="Westerfield M."/>
            <person name="de Jong P.J."/>
            <person name="Zon L.I."/>
            <person name="Postlethwait J.H."/>
            <person name="Nusslein-Volhard C."/>
            <person name="Hubbard T.J."/>
            <person name="Roest Crollius H."/>
            <person name="Rogers J."/>
            <person name="Stemple D.L."/>
        </authorList>
    </citation>
    <scope>NUCLEOTIDE SEQUENCE [LARGE SCALE GENOMIC DNA]</scope>
    <source>
        <strain>Tuebingen</strain>
    </source>
</reference>
<reference key="2">
    <citation type="submission" date="2003-10" db="EMBL/GenBank/DDBJ databases">
        <authorList>
            <consortium name="NIH - Zebrafish Gene Collection (ZGC) project"/>
        </authorList>
    </citation>
    <scope>NUCLEOTIDE SEQUENCE [LARGE SCALE MRNA]</scope>
    <source>
        <tissue>Retina</tissue>
    </source>
</reference>